<keyword id="KW-0963">Cytoplasm</keyword>
<keyword id="KW-0238">DNA-binding</keyword>
<keyword id="KW-0597">Phosphoprotein</keyword>
<keyword id="KW-1185">Reference proteome</keyword>
<keyword id="KW-0804">Transcription</keyword>
<keyword id="KW-0805">Transcription regulation</keyword>
<keyword id="KW-0902">Two-component regulatory system</keyword>
<proteinExistence type="inferred from homology"/>
<comment type="function">
    <text evidence="1">Essential protein that plays a role in the control of cell division, possibly through the transcriptional regulation of ccrM, rpoD, pleC, minC and ftsZ genes.</text>
</comment>
<comment type="subcellular location">
    <subcellularLocation>
        <location evidence="1">Cytoplasm</location>
    </subcellularLocation>
</comment>
<reference key="1">
    <citation type="journal article" date="2011" name="J. Bacteriol.">
        <title>Genome of Ochrobactrum anthropi ATCC 49188 T, a versatile opportunistic pathogen and symbiont of several eukaryotic hosts.</title>
        <authorList>
            <person name="Chain P.S."/>
            <person name="Lang D.M."/>
            <person name="Comerci D.J."/>
            <person name="Malfatti S.A."/>
            <person name="Vergez L.M."/>
            <person name="Shin M."/>
            <person name="Ugalde R.A."/>
            <person name="Garcia E."/>
            <person name="Tolmasky M.E."/>
        </authorList>
    </citation>
    <scope>NUCLEOTIDE SEQUENCE [LARGE SCALE GENOMIC DNA]</scope>
    <source>
        <strain>ATCC 49188 / DSM 6882 / CCUG 24695 / JCM 21032 / LMG 3331 / NBRC 15819 / NCTC 12168 / Alc 37</strain>
    </source>
</reference>
<name>CTRA_BRUA4</name>
<protein>
    <recommendedName>
        <fullName>Cell cycle response regulator CtrA</fullName>
    </recommendedName>
</protein>
<sequence>MRVLLIEDDSAIAQSIELMLKSESFNVYTTDLGEEGIDLGKLYDYDIILLDLNLPDMSGYEVLRTLRLSKVKTPILILSGMAGIEDKVRGLGFGADDYMTKPFHKDELIARIHAIVRRSKGHAQSVITTGDLVVNLDAKTVEVSGQRVHLTGKEYQMLELLSLRKGTTLTKEMFLNHLYGGMDEPELKIIDVFICKLRKKLDAVSGSQSYIETVWGRGYVLREPDAEMRESA</sequence>
<organism>
    <name type="scientific">Brucella anthropi (strain ATCC 49188 / DSM 6882 / CCUG 24695 / JCM 21032 / LMG 3331 / NBRC 15819 / NCTC 12168 / Alc 37)</name>
    <name type="common">Ochrobactrum anthropi</name>
    <dbReference type="NCBI Taxonomy" id="439375"/>
    <lineage>
        <taxon>Bacteria</taxon>
        <taxon>Pseudomonadati</taxon>
        <taxon>Pseudomonadota</taxon>
        <taxon>Alphaproteobacteria</taxon>
        <taxon>Hyphomicrobiales</taxon>
        <taxon>Brucellaceae</taxon>
        <taxon>Brucella/Ochrobactrum group</taxon>
        <taxon>Brucella</taxon>
    </lineage>
</organism>
<evidence type="ECO:0000250" key="1"/>
<evidence type="ECO:0000255" key="2">
    <source>
        <dbReference type="PROSITE-ProRule" id="PRU00169"/>
    </source>
</evidence>
<evidence type="ECO:0000255" key="3">
    <source>
        <dbReference type="PROSITE-ProRule" id="PRU01091"/>
    </source>
</evidence>
<accession>A6WZ81</accession>
<dbReference type="EMBL" id="CP000758">
    <property type="protein sequence ID" value="ABS14285.1"/>
    <property type="molecule type" value="Genomic_DNA"/>
</dbReference>
<dbReference type="RefSeq" id="WP_010659553.1">
    <property type="nucleotide sequence ID" value="NC_009667.1"/>
</dbReference>
<dbReference type="SMR" id="A6WZ81"/>
<dbReference type="STRING" id="439375.Oant_1569"/>
<dbReference type="GeneID" id="61318009"/>
<dbReference type="KEGG" id="oan:Oant_1569"/>
<dbReference type="eggNOG" id="COG0745">
    <property type="taxonomic scope" value="Bacteria"/>
</dbReference>
<dbReference type="HOGENOM" id="CLU_000445_30_1_5"/>
<dbReference type="PhylomeDB" id="A6WZ81"/>
<dbReference type="Proteomes" id="UP000002301">
    <property type="component" value="Chromosome 1"/>
</dbReference>
<dbReference type="GO" id="GO:0005829">
    <property type="term" value="C:cytosol"/>
    <property type="evidence" value="ECO:0007669"/>
    <property type="project" value="TreeGrafter"/>
</dbReference>
<dbReference type="GO" id="GO:0032993">
    <property type="term" value="C:protein-DNA complex"/>
    <property type="evidence" value="ECO:0007669"/>
    <property type="project" value="TreeGrafter"/>
</dbReference>
<dbReference type="GO" id="GO:0000156">
    <property type="term" value="F:phosphorelay response regulator activity"/>
    <property type="evidence" value="ECO:0007669"/>
    <property type="project" value="TreeGrafter"/>
</dbReference>
<dbReference type="GO" id="GO:0000976">
    <property type="term" value="F:transcription cis-regulatory region binding"/>
    <property type="evidence" value="ECO:0007669"/>
    <property type="project" value="TreeGrafter"/>
</dbReference>
<dbReference type="GO" id="GO:0006355">
    <property type="term" value="P:regulation of DNA-templated transcription"/>
    <property type="evidence" value="ECO:0007669"/>
    <property type="project" value="InterPro"/>
</dbReference>
<dbReference type="CDD" id="cd17616">
    <property type="entry name" value="REC_OmpR_CtrA"/>
    <property type="match status" value="1"/>
</dbReference>
<dbReference type="CDD" id="cd00383">
    <property type="entry name" value="trans_reg_C"/>
    <property type="match status" value="1"/>
</dbReference>
<dbReference type="FunFam" id="1.10.10.10:FF:000052">
    <property type="entry name" value="Cell cycle response regulator"/>
    <property type="match status" value="1"/>
</dbReference>
<dbReference type="FunFam" id="3.40.50.2300:FF:000011">
    <property type="entry name" value="Cell cycle response regulator CtrA"/>
    <property type="match status" value="1"/>
</dbReference>
<dbReference type="Gene3D" id="3.40.50.2300">
    <property type="match status" value="1"/>
</dbReference>
<dbReference type="Gene3D" id="6.10.250.690">
    <property type="match status" value="1"/>
</dbReference>
<dbReference type="Gene3D" id="1.10.10.10">
    <property type="entry name" value="Winged helix-like DNA-binding domain superfamily/Winged helix DNA-binding domain"/>
    <property type="match status" value="1"/>
</dbReference>
<dbReference type="InterPro" id="IPR011006">
    <property type="entry name" value="CheY-like_superfamily"/>
</dbReference>
<dbReference type="InterPro" id="IPR001867">
    <property type="entry name" value="OmpR/PhoB-type_DNA-bd"/>
</dbReference>
<dbReference type="InterPro" id="IPR001789">
    <property type="entry name" value="Sig_transdc_resp-reg_receiver"/>
</dbReference>
<dbReference type="InterPro" id="IPR039420">
    <property type="entry name" value="WalR-like"/>
</dbReference>
<dbReference type="InterPro" id="IPR036388">
    <property type="entry name" value="WH-like_DNA-bd_sf"/>
</dbReference>
<dbReference type="NCBIfam" id="NF045991">
    <property type="entry name" value="RespRegCtrARhodob"/>
    <property type="match status" value="1"/>
</dbReference>
<dbReference type="PANTHER" id="PTHR48111">
    <property type="entry name" value="REGULATOR OF RPOS"/>
    <property type="match status" value="1"/>
</dbReference>
<dbReference type="PANTHER" id="PTHR48111:SF22">
    <property type="entry name" value="REGULATOR OF RPOS"/>
    <property type="match status" value="1"/>
</dbReference>
<dbReference type="Pfam" id="PF00072">
    <property type="entry name" value="Response_reg"/>
    <property type="match status" value="1"/>
</dbReference>
<dbReference type="Pfam" id="PF00486">
    <property type="entry name" value="Trans_reg_C"/>
    <property type="match status" value="1"/>
</dbReference>
<dbReference type="SMART" id="SM00448">
    <property type="entry name" value="REC"/>
    <property type="match status" value="1"/>
</dbReference>
<dbReference type="SMART" id="SM00862">
    <property type="entry name" value="Trans_reg_C"/>
    <property type="match status" value="1"/>
</dbReference>
<dbReference type="SUPFAM" id="SSF52172">
    <property type="entry name" value="CheY-like"/>
    <property type="match status" value="1"/>
</dbReference>
<dbReference type="PROSITE" id="PS51755">
    <property type="entry name" value="OMPR_PHOB"/>
    <property type="match status" value="1"/>
</dbReference>
<dbReference type="PROSITE" id="PS50110">
    <property type="entry name" value="RESPONSE_REGULATORY"/>
    <property type="match status" value="1"/>
</dbReference>
<gene>
    <name type="primary">ctrA</name>
    <name type="ordered locus">Oant_1569</name>
</gene>
<feature type="chain" id="PRO_0000363203" description="Cell cycle response regulator CtrA">
    <location>
        <begin position="1"/>
        <end position="232"/>
    </location>
</feature>
<feature type="domain" description="Response regulatory" evidence="2">
    <location>
        <begin position="2"/>
        <end position="116"/>
    </location>
</feature>
<feature type="DNA-binding region" description="OmpR/PhoB-type" evidence="3">
    <location>
        <begin position="124"/>
        <end position="223"/>
    </location>
</feature>
<feature type="modified residue" description="4-aspartylphosphate" evidence="2">
    <location>
        <position position="51"/>
    </location>
</feature>